<evidence type="ECO:0000255" key="1">
    <source>
        <dbReference type="HAMAP-Rule" id="MF_01646"/>
    </source>
</evidence>
<comment type="function">
    <text evidence="1">Multifunctional enzyme that catalyzes the SAM-dependent methylations of uroporphyrinogen III at position C-2 and C-7 to form precorrin-2 via precorrin-1. Then it catalyzes the NAD-dependent ring dehydrogenation of precorrin-2 to yield sirohydrochlorin. Finally, it catalyzes the ferrochelation of sirohydrochlorin to yield siroheme.</text>
</comment>
<comment type="catalytic activity">
    <reaction evidence="1">
        <text>uroporphyrinogen III + 2 S-adenosyl-L-methionine = precorrin-2 + 2 S-adenosyl-L-homocysteine + H(+)</text>
        <dbReference type="Rhea" id="RHEA:32459"/>
        <dbReference type="ChEBI" id="CHEBI:15378"/>
        <dbReference type="ChEBI" id="CHEBI:57308"/>
        <dbReference type="ChEBI" id="CHEBI:57856"/>
        <dbReference type="ChEBI" id="CHEBI:58827"/>
        <dbReference type="ChEBI" id="CHEBI:59789"/>
        <dbReference type="EC" id="2.1.1.107"/>
    </reaction>
</comment>
<comment type="catalytic activity">
    <reaction evidence="1">
        <text>precorrin-2 + NAD(+) = sirohydrochlorin + NADH + 2 H(+)</text>
        <dbReference type="Rhea" id="RHEA:15613"/>
        <dbReference type="ChEBI" id="CHEBI:15378"/>
        <dbReference type="ChEBI" id="CHEBI:57540"/>
        <dbReference type="ChEBI" id="CHEBI:57945"/>
        <dbReference type="ChEBI" id="CHEBI:58351"/>
        <dbReference type="ChEBI" id="CHEBI:58827"/>
        <dbReference type="EC" id="1.3.1.76"/>
    </reaction>
</comment>
<comment type="catalytic activity">
    <reaction evidence="1">
        <text>siroheme + 2 H(+) = sirohydrochlorin + Fe(2+)</text>
        <dbReference type="Rhea" id="RHEA:24360"/>
        <dbReference type="ChEBI" id="CHEBI:15378"/>
        <dbReference type="ChEBI" id="CHEBI:29033"/>
        <dbReference type="ChEBI" id="CHEBI:58351"/>
        <dbReference type="ChEBI" id="CHEBI:60052"/>
        <dbReference type="EC" id="4.99.1.4"/>
    </reaction>
</comment>
<comment type="pathway">
    <text evidence="1">Cofactor biosynthesis; adenosylcobalamin biosynthesis; precorrin-2 from uroporphyrinogen III: step 1/1.</text>
</comment>
<comment type="pathway">
    <text evidence="1">Cofactor biosynthesis; adenosylcobalamin biosynthesis; sirohydrochlorin from precorrin-2: step 1/1.</text>
</comment>
<comment type="pathway">
    <text evidence="1">Porphyrin-containing compound metabolism; siroheme biosynthesis; precorrin-2 from uroporphyrinogen III: step 1/1.</text>
</comment>
<comment type="pathway">
    <text evidence="1">Porphyrin-containing compound metabolism; siroheme biosynthesis; siroheme from sirohydrochlorin: step 1/1.</text>
</comment>
<comment type="pathway">
    <text evidence="1">Porphyrin-containing compound metabolism; siroheme biosynthesis; sirohydrochlorin from precorrin-2: step 1/1.</text>
</comment>
<comment type="similarity">
    <text evidence="1">In the N-terminal section; belongs to the precorrin-2 dehydrogenase / sirohydrochlorin ferrochelatase family.</text>
</comment>
<comment type="similarity">
    <text evidence="1">In the C-terminal section; belongs to the precorrin methyltransferase family.</text>
</comment>
<sequence length="457" mass="50008">MDHLPIFCQLRDRDCLIVGGGDVAERKARLLLDAGARLTVNALAFIPQFTAWADAGMLTLVEGPFDESLLDTCWLAIAATDDDALNQRVSEAAEARRIFCNVVDAPKAASFIMPSIIDRSPLMVAVSSGGTSPVLARLLREKLESLLPLHLGQVAKYAGQLRGRVKQQFATMGERRRFWEKLFVNDRLAQSLANNDQKAITETTEQLINEPLDHRGEVVLVGAGPGDAGLLTLKGLQQIQQADVVVYDRLVSDDIMNLVRRDADRVFVGKRAGYHCVPQEEINQILLREAQKGKRVVRLKGGDPFIFGRGGEELETLCNAGIPFSVVPGITAASGCSAYSGIPLTHRDYAQSVRLITGHLKTGGELDWENLAAEKQTLVFYMGLNQAATIQQKLIEHDMPGEMPVAIVENGTAVTQRVIDGTLTQLGKLAQQMNSPSLIIIGRVVGLRDKLNWFSNH</sequence>
<proteinExistence type="inferred from homology"/>
<reference key="1">
    <citation type="journal article" date="2005" name="Nucleic Acids Res.">
        <title>Genome dynamics and diversity of Shigella species, the etiologic agents of bacillary dysentery.</title>
        <authorList>
            <person name="Yang F."/>
            <person name="Yang J."/>
            <person name="Zhang X."/>
            <person name="Chen L."/>
            <person name="Jiang Y."/>
            <person name="Yan Y."/>
            <person name="Tang X."/>
            <person name="Wang J."/>
            <person name="Xiong Z."/>
            <person name="Dong J."/>
            <person name="Xue Y."/>
            <person name="Zhu Y."/>
            <person name="Xu X."/>
            <person name="Sun L."/>
            <person name="Chen S."/>
            <person name="Nie H."/>
            <person name="Peng J."/>
            <person name="Xu J."/>
            <person name="Wang Y."/>
            <person name="Yuan Z."/>
            <person name="Wen Y."/>
            <person name="Yao Z."/>
            <person name="Shen Y."/>
            <person name="Qiang B."/>
            <person name="Hou Y."/>
            <person name="Yu J."/>
            <person name="Jin Q."/>
        </authorList>
    </citation>
    <scope>NUCLEOTIDE SEQUENCE [LARGE SCALE GENOMIC DNA]</scope>
    <source>
        <strain>Sd197</strain>
    </source>
</reference>
<feature type="chain" id="PRO_0000330560" description="Siroheme synthase">
    <location>
        <begin position="1"/>
        <end position="457"/>
    </location>
</feature>
<feature type="region of interest" description="Precorrin-2 dehydrogenase /sirohydrochlorin ferrochelatase" evidence="1">
    <location>
        <begin position="1"/>
        <end position="204"/>
    </location>
</feature>
<feature type="region of interest" description="Uroporphyrinogen-III C-methyltransferase" evidence="1">
    <location>
        <begin position="216"/>
        <end position="457"/>
    </location>
</feature>
<feature type="active site" description="Proton acceptor" evidence="1">
    <location>
        <position position="248"/>
    </location>
</feature>
<feature type="active site" description="Proton donor" evidence="1">
    <location>
        <position position="270"/>
    </location>
</feature>
<feature type="binding site" evidence="1">
    <location>
        <begin position="22"/>
        <end position="23"/>
    </location>
    <ligand>
        <name>NAD(+)</name>
        <dbReference type="ChEBI" id="CHEBI:57540"/>
    </ligand>
</feature>
<feature type="binding site" evidence="1">
    <location>
        <begin position="43"/>
        <end position="44"/>
    </location>
    <ligand>
        <name>NAD(+)</name>
        <dbReference type="ChEBI" id="CHEBI:57540"/>
    </ligand>
</feature>
<feature type="binding site" evidence="1">
    <location>
        <position position="225"/>
    </location>
    <ligand>
        <name>S-adenosyl-L-methionine</name>
        <dbReference type="ChEBI" id="CHEBI:59789"/>
    </ligand>
</feature>
<feature type="binding site" evidence="1">
    <location>
        <begin position="301"/>
        <end position="303"/>
    </location>
    <ligand>
        <name>S-adenosyl-L-methionine</name>
        <dbReference type="ChEBI" id="CHEBI:59789"/>
    </ligand>
</feature>
<feature type="binding site" evidence="1">
    <location>
        <position position="306"/>
    </location>
    <ligand>
        <name>S-adenosyl-L-methionine</name>
        <dbReference type="ChEBI" id="CHEBI:59789"/>
    </ligand>
</feature>
<feature type="binding site" evidence="1">
    <location>
        <begin position="331"/>
        <end position="332"/>
    </location>
    <ligand>
        <name>S-adenosyl-L-methionine</name>
        <dbReference type="ChEBI" id="CHEBI:59789"/>
    </ligand>
</feature>
<feature type="binding site" evidence="1">
    <location>
        <position position="382"/>
    </location>
    <ligand>
        <name>S-adenosyl-L-methionine</name>
        <dbReference type="ChEBI" id="CHEBI:59789"/>
    </ligand>
</feature>
<feature type="binding site" evidence="1">
    <location>
        <position position="411"/>
    </location>
    <ligand>
        <name>S-adenosyl-L-methionine</name>
        <dbReference type="ChEBI" id="CHEBI:59789"/>
    </ligand>
</feature>
<feature type="modified residue" description="Phosphoserine" evidence="1">
    <location>
        <position position="128"/>
    </location>
</feature>
<gene>
    <name evidence="1" type="primary">cysG</name>
    <name type="ordered locus">SDY_3530</name>
</gene>
<keyword id="KW-0169">Cobalamin biosynthesis</keyword>
<keyword id="KW-0456">Lyase</keyword>
<keyword id="KW-0489">Methyltransferase</keyword>
<keyword id="KW-0511">Multifunctional enzyme</keyword>
<keyword id="KW-0520">NAD</keyword>
<keyword id="KW-0560">Oxidoreductase</keyword>
<keyword id="KW-0597">Phosphoprotein</keyword>
<keyword id="KW-0627">Porphyrin biosynthesis</keyword>
<keyword id="KW-1185">Reference proteome</keyword>
<keyword id="KW-0949">S-adenosyl-L-methionine</keyword>
<keyword id="KW-0808">Transferase</keyword>
<name>CYSG_SHIDS</name>
<protein>
    <recommendedName>
        <fullName evidence="1">Siroheme synthase</fullName>
    </recommendedName>
    <domain>
        <recommendedName>
            <fullName evidence="1">Uroporphyrinogen-III C-methyltransferase</fullName>
            <shortName evidence="1">Urogen III methylase</shortName>
            <ecNumber evidence="1">2.1.1.107</ecNumber>
        </recommendedName>
        <alternativeName>
            <fullName evidence="1">SUMT</fullName>
        </alternativeName>
        <alternativeName>
            <fullName evidence="1">Uroporphyrinogen III methylase</fullName>
            <shortName evidence="1">UROM</shortName>
        </alternativeName>
    </domain>
    <domain>
        <recommendedName>
            <fullName evidence="1">Precorrin-2 dehydrogenase</fullName>
            <ecNumber evidence="1">1.3.1.76</ecNumber>
        </recommendedName>
    </domain>
    <domain>
        <recommendedName>
            <fullName evidence="1">Sirohydrochlorin ferrochelatase</fullName>
            <ecNumber evidence="1">4.99.1.4</ecNumber>
        </recommendedName>
    </domain>
</protein>
<accession>Q32AZ8</accession>
<organism>
    <name type="scientific">Shigella dysenteriae serotype 1 (strain Sd197)</name>
    <dbReference type="NCBI Taxonomy" id="300267"/>
    <lineage>
        <taxon>Bacteria</taxon>
        <taxon>Pseudomonadati</taxon>
        <taxon>Pseudomonadota</taxon>
        <taxon>Gammaproteobacteria</taxon>
        <taxon>Enterobacterales</taxon>
        <taxon>Enterobacteriaceae</taxon>
        <taxon>Shigella</taxon>
    </lineage>
</organism>
<dbReference type="EC" id="2.1.1.107" evidence="1"/>
<dbReference type="EC" id="1.3.1.76" evidence="1"/>
<dbReference type="EC" id="4.99.1.4" evidence="1"/>
<dbReference type="EMBL" id="CP000034">
    <property type="protein sequence ID" value="ABB63507.1"/>
    <property type="molecule type" value="Genomic_DNA"/>
</dbReference>
<dbReference type="RefSeq" id="WP_000349853.1">
    <property type="nucleotide sequence ID" value="NC_007606.1"/>
</dbReference>
<dbReference type="RefSeq" id="YP_404998.1">
    <property type="nucleotide sequence ID" value="NC_007606.1"/>
</dbReference>
<dbReference type="SMR" id="Q32AZ8"/>
<dbReference type="STRING" id="300267.SDY_3530"/>
<dbReference type="EnsemblBacteria" id="ABB63507">
    <property type="protein sequence ID" value="ABB63507"/>
    <property type="gene ID" value="SDY_3530"/>
</dbReference>
<dbReference type="KEGG" id="sdy:SDY_3530"/>
<dbReference type="PATRIC" id="fig|300267.13.peg.4184"/>
<dbReference type="HOGENOM" id="CLU_011276_2_0_6"/>
<dbReference type="UniPathway" id="UPA00148">
    <property type="reaction ID" value="UER00211"/>
</dbReference>
<dbReference type="UniPathway" id="UPA00148">
    <property type="reaction ID" value="UER00222"/>
</dbReference>
<dbReference type="UniPathway" id="UPA00262">
    <property type="reaction ID" value="UER00211"/>
</dbReference>
<dbReference type="UniPathway" id="UPA00262">
    <property type="reaction ID" value="UER00222"/>
</dbReference>
<dbReference type="UniPathway" id="UPA00262">
    <property type="reaction ID" value="UER00376"/>
</dbReference>
<dbReference type="Proteomes" id="UP000002716">
    <property type="component" value="Chromosome"/>
</dbReference>
<dbReference type="GO" id="GO:0051287">
    <property type="term" value="F:NAD binding"/>
    <property type="evidence" value="ECO:0007669"/>
    <property type="project" value="InterPro"/>
</dbReference>
<dbReference type="GO" id="GO:0043115">
    <property type="term" value="F:precorrin-2 dehydrogenase activity"/>
    <property type="evidence" value="ECO:0007669"/>
    <property type="project" value="UniProtKB-UniRule"/>
</dbReference>
<dbReference type="GO" id="GO:0051266">
    <property type="term" value="F:sirohydrochlorin ferrochelatase activity"/>
    <property type="evidence" value="ECO:0007669"/>
    <property type="project" value="UniProtKB-EC"/>
</dbReference>
<dbReference type="GO" id="GO:0004851">
    <property type="term" value="F:uroporphyrin-III C-methyltransferase activity"/>
    <property type="evidence" value="ECO:0007669"/>
    <property type="project" value="UniProtKB-UniRule"/>
</dbReference>
<dbReference type="GO" id="GO:0009236">
    <property type="term" value="P:cobalamin biosynthetic process"/>
    <property type="evidence" value="ECO:0007669"/>
    <property type="project" value="UniProtKB-UniRule"/>
</dbReference>
<dbReference type="GO" id="GO:0032259">
    <property type="term" value="P:methylation"/>
    <property type="evidence" value="ECO:0007669"/>
    <property type="project" value="UniProtKB-KW"/>
</dbReference>
<dbReference type="GO" id="GO:0019354">
    <property type="term" value="P:siroheme biosynthetic process"/>
    <property type="evidence" value="ECO:0007669"/>
    <property type="project" value="UniProtKB-UniRule"/>
</dbReference>
<dbReference type="CDD" id="cd11642">
    <property type="entry name" value="SUMT"/>
    <property type="match status" value="1"/>
</dbReference>
<dbReference type="FunFam" id="1.10.8.210:FF:000001">
    <property type="entry name" value="Siroheme synthase"/>
    <property type="match status" value="1"/>
</dbReference>
<dbReference type="FunFam" id="3.30.160.110:FF:000001">
    <property type="entry name" value="Siroheme synthase"/>
    <property type="match status" value="1"/>
</dbReference>
<dbReference type="FunFam" id="3.30.950.10:FF:000001">
    <property type="entry name" value="Siroheme synthase"/>
    <property type="match status" value="1"/>
</dbReference>
<dbReference type="FunFam" id="3.40.1010.10:FF:000001">
    <property type="entry name" value="Siroheme synthase"/>
    <property type="match status" value="1"/>
</dbReference>
<dbReference type="FunFam" id="3.40.50.720:FF:000092">
    <property type="entry name" value="Siroheme synthase"/>
    <property type="match status" value="1"/>
</dbReference>
<dbReference type="Gene3D" id="3.40.1010.10">
    <property type="entry name" value="Cobalt-precorrin-4 Transmethylase, Domain 1"/>
    <property type="match status" value="1"/>
</dbReference>
<dbReference type="Gene3D" id="3.30.950.10">
    <property type="entry name" value="Methyltransferase, Cobalt-precorrin-4 Transmethylase, Domain 2"/>
    <property type="match status" value="1"/>
</dbReference>
<dbReference type="Gene3D" id="3.40.50.720">
    <property type="entry name" value="NAD(P)-binding Rossmann-like Domain"/>
    <property type="match status" value="1"/>
</dbReference>
<dbReference type="Gene3D" id="1.10.8.210">
    <property type="entry name" value="Sirohaem synthase, dimerisation domain"/>
    <property type="match status" value="1"/>
</dbReference>
<dbReference type="Gene3D" id="3.30.160.110">
    <property type="entry name" value="Siroheme synthase, domain 2"/>
    <property type="match status" value="1"/>
</dbReference>
<dbReference type="HAMAP" id="MF_01646">
    <property type="entry name" value="Siroheme_synth"/>
    <property type="match status" value="1"/>
</dbReference>
<dbReference type="InterPro" id="IPR000878">
    <property type="entry name" value="4pyrrol_Mease"/>
</dbReference>
<dbReference type="InterPro" id="IPR035996">
    <property type="entry name" value="4pyrrol_Methylase_sf"/>
</dbReference>
<dbReference type="InterPro" id="IPR014777">
    <property type="entry name" value="4pyrrole_Mease_sub1"/>
</dbReference>
<dbReference type="InterPro" id="IPR014776">
    <property type="entry name" value="4pyrrole_Mease_sub2"/>
</dbReference>
<dbReference type="InterPro" id="IPR006366">
    <property type="entry name" value="CobA/CysG_C"/>
</dbReference>
<dbReference type="InterPro" id="IPR036291">
    <property type="entry name" value="NAD(P)-bd_dom_sf"/>
</dbReference>
<dbReference type="InterPro" id="IPR050161">
    <property type="entry name" value="Siro_Cobalamin_biosynth"/>
</dbReference>
<dbReference type="InterPro" id="IPR037115">
    <property type="entry name" value="Sirohaem_synt_dimer_dom_sf"/>
</dbReference>
<dbReference type="InterPro" id="IPR012409">
    <property type="entry name" value="Sirohaem_synth"/>
</dbReference>
<dbReference type="InterPro" id="IPR028281">
    <property type="entry name" value="Sirohaem_synthase_central"/>
</dbReference>
<dbReference type="InterPro" id="IPR019478">
    <property type="entry name" value="Sirohaem_synthase_dimer_dom"/>
</dbReference>
<dbReference type="InterPro" id="IPR006367">
    <property type="entry name" value="Sirohaem_synthase_N"/>
</dbReference>
<dbReference type="InterPro" id="IPR003043">
    <property type="entry name" value="Uropor_MeTrfase_CS"/>
</dbReference>
<dbReference type="NCBIfam" id="TIGR01469">
    <property type="entry name" value="cobA_cysG_Cterm"/>
    <property type="match status" value="1"/>
</dbReference>
<dbReference type="NCBIfam" id="TIGR01470">
    <property type="entry name" value="cysG_Nterm"/>
    <property type="match status" value="1"/>
</dbReference>
<dbReference type="NCBIfam" id="NF004790">
    <property type="entry name" value="PRK06136.1"/>
    <property type="match status" value="1"/>
</dbReference>
<dbReference type="NCBIfam" id="NF007922">
    <property type="entry name" value="PRK10637.1"/>
    <property type="match status" value="1"/>
</dbReference>
<dbReference type="PANTHER" id="PTHR45790:SF1">
    <property type="entry name" value="SIROHEME SYNTHASE"/>
    <property type="match status" value="1"/>
</dbReference>
<dbReference type="PANTHER" id="PTHR45790">
    <property type="entry name" value="SIROHEME SYNTHASE-RELATED"/>
    <property type="match status" value="1"/>
</dbReference>
<dbReference type="Pfam" id="PF10414">
    <property type="entry name" value="CysG_dimeriser"/>
    <property type="match status" value="1"/>
</dbReference>
<dbReference type="Pfam" id="PF13241">
    <property type="entry name" value="NAD_binding_7"/>
    <property type="match status" value="1"/>
</dbReference>
<dbReference type="Pfam" id="PF14824">
    <property type="entry name" value="Sirohm_synth_M"/>
    <property type="match status" value="1"/>
</dbReference>
<dbReference type="Pfam" id="PF00590">
    <property type="entry name" value="TP_methylase"/>
    <property type="match status" value="1"/>
</dbReference>
<dbReference type="PIRSF" id="PIRSF036426">
    <property type="entry name" value="Sirohaem_synth"/>
    <property type="match status" value="1"/>
</dbReference>
<dbReference type="SUPFAM" id="SSF51735">
    <property type="entry name" value="NAD(P)-binding Rossmann-fold domains"/>
    <property type="match status" value="1"/>
</dbReference>
<dbReference type="SUPFAM" id="SSF75615">
    <property type="entry name" value="Siroheme synthase middle domains-like"/>
    <property type="match status" value="1"/>
</dbReference>
<dbReference type="SUPFAM" id="SSF53790">
    <property type="entry name" value="Tetrapyrrole methylase"/>
    <property type="match status" value="1"/>
</dbReference>
<dbReference type="PROSITE" id="PS00839">
    <property type="entry name" value="SUMT_1"/>
    <property type="match status" value="1"/>
</dbReference>
<dbReference type="PROSITE" id="PS00840">
    <property type="entry name" value="SUMT_2"/>
    <property type="match status" value="1"/>
</dbReference>